<protein>
    <recommendedName>
        <fullName evidence="1">Elongation factor Ts</fullName>
        <shortName evidence="1">EF-Ts</shortName>
    </recommendedName>
</protein>
<name>EFTS_LISMO</name>
<gene>
    <name evidence="1" type="primary">tsf</name>
    <name type="ordered locus">lmo1657</name>
</gene>
<keyword id="KW-0963">Cytoplasm</keyword>
<keyword id="KW-0251">Elongation factor</keyword>
<keyword id="KW-0648">Protein biosynthesis</keyword>
<keyword id="KW-1185">Reference proteome</keyword>
<dbReference type="EMBL" id="AL591980">
    <property type="protein sequence ID" value="CAC99735.1"/>
    <property type="molecule type" value="Genomic_DNA"/>
</dbReference>
<dbReference type="PIR" id="AI1281">
    <property type="entry name" value="AI1281"/>
</dbReference>
<dbReference type="RefSeq" id="NP_465182.1">
    <property type="nucleotide sequence ID" value="NC_003210.1"/>
</dbReference>
<dbReference type="RefSeq" id="WP_003733232.1">
    <property type="nucleotide sequence ID" value="NZ_CP149495.1"/>
</dbReference>
<dbReference type="SMR" id="Q8Y6M7"/>
<dbReference type="STRING" id="169963.gene:17594314"/>
<dbReference type="PaxDb" id="169963-lmo1657"/>
<dbReference type="EnsemblBacteria" id="CAC99735">
    <property type="protein sequence ID" value="CAC99735"/>
    <property type="gene ID" value="CAC99735"/>
</dbReference>
<dbReference type="GeneID" id="985671"/>
<dbReference type="KEGG" id="lmo:lmo1657"/>
<dbReference type="PATRIC" id="fig|169963.11.peg.1700"/>
<dbReference type="eggNOG" id="COG0264">
    <property type="taxonomic scope" value="Bacteria"/>
</dbReference>
<dbReference type="HOGENOM" id="CLU_047155_0_2_9"/>
<dbReference type="OrthoDB" id="9808348at2"/>
<dbReference type="PhylomeDB" id="Q8Y6M7"/>
<dbReference type="BioCyc" id="LMON169963:LMO1657-MONOMER"/>
<dbReference type="Proteomes" id="UP000000817">
    <property type="component" value="Chromosome"/>
</dbReference>
<dbReference type="GO" id="GO:0005737">
    <property type="term" value="C:cytoplasm"/>
    <property type="evidence" value="ECO:0007669"/>
    <property type="project" value="UniProtKB-SubCell"/>
</dbReference>
<dbReference type="GO" id="GO:0003746">
    <property type="term" value="F:translation elongation factor activity"/>
    <property type="evidence" value="ECO:0000318"/>
    <property type="project" value="GO_Central"/>
</dbReference>
<dbReference type="GO" id="GO:0006414">
    <property type="term" value="P:translational elongation"/>
    <property type="evidence" value="ECO:0000318"/>
    <property type="project" value="GO_Central"/>
</dbReference>
<dbReference type="CDD" id="cd14275">
    <property type="entry name" value="UBA_EF-Ts"/>
    <property type="match status" value="1"/>
</dbReference>
<dbReference type="FunFam" id="1.10.286.20:FF:000003">
    <property type="entry name" value="Elongation factor Ts"/>
    <property type="match status" value="1"/>
</dbReference>
<dbReference type="FunFam" id="1.10.8.10:FF:000001">
    <property type="entry name" value="Elongation factor Ts"/>
    <property type="match status" value="1"/>
</dbReference>
<dbReference type="FunFam" id="3.30.479.20:FF:000005">
    <property type="entry name" value="Elongation factor Ts"/>
    <property type="match status" value="1"/>
</dbReference>
<dbReference type="Gene3D" id="1.10.286.20">
    <property type="match status" value="1"/>
</dbReference>
<dbReference type="Gene3D" id="1.10.8.10">
    <property type="entry name" value="DNA helicase RuvA subunit, C-terminal domain"/>
    <property type="match status" value="1"/>
</dbReference>
<dbReference type="Gene3D" id="3.30.479.20">
    <property type="entry name" value="Elongation factor Ts, dimerisation domain"/>
    <property type="match status" value="2"/>
</dbReference>
<dbReference type="HAMAP" id="MF_00050">
    <property type="entry name" value="EF_Ts"/>
    <property type="match status" value="1"/>
</dbReference>
<dbReference type="InterPro" id="IPR036402">
    <property type="entry name" value="EF-Ts_dimer_sf"/>
</dbReference>
<dbReference type="InterPro" id="IPR001816">
    <property type="entry name" value="Transl_elong_EFTs/EF1B"/>
</dbReference>
<dbReference type="InterPro" id="IPR014039">
    <property type="entry name" value="Transl_elong_EFTs/EF1B_dimer"/>
</dbReference>
<dbReference type="InterPro" id="IPR018101">
    <property type="entry name" value="Transl_elong_Ts_CS"/>
</dbReference>
<dbReference type="InterPro" id="IPR009060">
    <property type="entry name" value="UBA-like_sf"/>
</dbReference>
<dbReference type="NCBIfam" id="TIGR00116">
    <property type="entry name" value="tsf"/>
    <property type="match status" value="1"/>
</dbReference>
<dbReference type="PANTHER" id="PTHR11741">
    <property type="entry name" value="ELONGATION FACTOR TS"/>
    <property type="match status" value="1"/>
</dbReference>
<dbReference type="PANTHER" id="PTHR11741:SF0">
    <property type="entry name" value="ELONGATION FACTOR TS, MITOCHONDRIAL"/>
    <property type="match status" value="1"/>
</dbReference>
<dbReference type="Pfam" id="PF00889">
    <property type="entry name" value="EF_TS"/>
    <property type="match status" value="1"/>
</dbReference>
<dbReference type="SUPFAM" id="SSF54713">
    <property type="entry name" value="Elongation factor Ts (EF-Ts), dimerisation domain"/>
    <property type="match status" value="2"/>
</dbReference>
<dbReference type="SUPFAM" id="SSF46934">
    <property type="entry name" value="UBA-like"/>
    <property type="match status" value="1"/>
</dbReference>
<dbReference type="PROSITE" id="PS01126">
    <property type="entry name" value="EF_TS_1"/>
    <property type="match status" value="1"/>
</dbReference>
<dbReference type="PROSITE" id="PS01127">
    <property type="entry name" value="EF_TS_2"/>
    <property type="match status" value="1"/>
</dbReference>
<reference key="1">
    <citation type="journal article" date="2001" name="Science">
        <title>Comparative genomics of Listeria species.</title>
        <authorList>
            <person name="Glaser P."/>
            <person name="Frangeul L."/>
            <person name="Buchrieser C."/>
            <person name="Rusniok C."/>
            <person name="Amend A."/>
            <person name="Baquero F."/>
            <person name="Berche P."/>
            <person name="Bloecker H."/>
            <person name="Brandt P."/>
            <person name="Chakraborty T."/>
            <person name="Charbit A."/>
            <person name="Chetouani F."/>
            <person name="Couve E."/>
            <person name="de Daruvar A."/>
            <person name="Dehoux P."/>
            <person name="Domann E."/>
            <person name="Dominguez-Bernal G."/>
            <person name="Duchaud E."/>
            <person name="Durant L."/>
            <person name="Dussurget O."/>
            <person name="Entian K.-D."/>
            <person name="Fsihi H."/>
            <person name="Garcia-del Portillo F."/>
            <person name="Garrido P."/>
            <person name="Gautier L."/>
            <person name="Goebel W."/>
            <person name="Gomez-Lopez N."/>
            <person name="Hain T."/>
            <person name="Hauf J."/>
            <person name="Jackson D."/>
            <person name="Jones L.-M."/>
            <person name="Kaerst U."/>
            <person name="Kreft J."/>
            <person name="Kuhn M."/>
            <person name="Kunst F."/>
            <person name="Kurapkat G."/>
            <person name="Madueno E."/>
            <person name="Maitournam A."/>
            <person name="Mata Vicente J."/>
            <person name="Ng E."/>
            <person name="Nedjari H."/>
            <person name="Nordsiek G."/>
            <person name="Novella S."/>
            <person name="de Pablos B."/>
            <person name="Perez-Diaz J.-C."/>
            <person name="Purcell R."/>
            <person name="Remmel B."/>
            <person name="Rose M."/>
            <person name="Schlueter T."/>
            <person name="Simoes N."/>
            <person name="Tierrez A."/>
            <person name="Vazquez-Boland J.-A."/>
            <person name="Voss H."/>
            <person name="Wehland J."/>
            <person name="Cossart P."/>
        </authorList>
    </citation>
    <scope>NUCLEOTIDE SEQUENCE [LARGE SCALE GENOMIC DNA]</scope>
    <source>
        <strain>ATCC BAA-679 / EGD-e</strain>
    </source>
</reference>
<proteinExistence type="inferred from homology"/>
<sequence length="294" mass="32638">MANITAQMVKELREKTGAGMMDCKKALVETEGDMEKAIDYLREKGIAKAAKKSDRVASEGMTHVISNEKHAVVLEVNAETDFVAKNDNFQQLVDALAKQILAVRPDSLEDALKTEMPNGQTVQDYITEAITKIGENISLRRFEVKEKADNSAFGEYIHMNGRIGVLTLLEGTTDTTVAKDVAMHIAAINPKYISREDVSSEEVAHEKEVLTQQALNEGKPANIVEKMVEGRLKKYLSEISLEDQPFVKNPDITVGEYVKQSGGKVVSFVRFEVGEGIEKKEDNFVEEVMSQVKK</sequence>
<organism>
    <name type="scientific">Listeria monocytogenes serovar 1/2a (strain ATCC BAA-679 / EGD-e)</name>
    <dbReference type="NCBI Taxonomy" id="169963"/>
    <lineage>
        <taxon>Bacteria</taxon>
        <taxon>Bacillati</taxon>
        <taxon>Bacillota</taxon>
        <taxon>Bacilli</taxon>
        <taxon>Bacillales</taxon>
        <taxon>Listeriaceae</taxon>
        <taxon>Listeria</taxon>
    </lineage>
</organism>
<comment type="function">
    <text evidence="1">Associates with the EF-Tu.GDP complex and induces the exchange of GDP to GTP. It remains bound to the aminoacyl-tRNA.EF-Tu.GTP complex up to the GTP hydrolysis stage on the ribosome.</text>
</comment>
<comment type="subcellular location">
    <subcellularLocation>
        <location evidence="1">Cytoplasm</location>
    </subcellularLocation>
</comment>
<comment type="similarity">
    <text evidence="1">Belongs to the EF-Ts family.</text>
</comment>
<evidence type="ECO:0000255" key="1">
    <source>
        <dbReference type="HAMAP-Rule" id="MF_00050"/>
    </source>
</evidence>
<accession>Q8Y6M7</accession>
<feature type="chain" id="PRO_0000161145" description="Elongation factor Ts">
    <location>
        <begin position="1"/>
        <end position="294"/>
    </location>
</feature>
<feature type="region of interest" description="Involved in Mg(2+) ion dislocation from EF-Tu" evidence="1">
    <location>
        <begin position="80"/>
        <end position="83"/>
    </location>
</feature>